<evidence type="ECO:0000255" key="1"/>
<evidence type="ECO:0000255" key="2">
    <source>
        <dbReference type="PROSITE-ProRule" id="PRU01151"/>
    </source>
</evidence>
<evidence type="ECO:0000269" key="3">
    <source>
    </source>
</evidence>
<evidence type="ECO:0000303" key="4">
    <source>
    </source>
</evidence>
<evidence type="ECO:0000305" key="5"/>
<evidence type="ECO:0000312" key="6">
    <source>
        <dbReference type="EMBL" id="ABC77353.2"/>
    </source>
</evidence>
<comment type="function">
    <text evidence="3">Catalyzes the condensation of the acetyl group of acetyl-CoA with oxaloacetate to form citrate.</text>
</comment>
<comment type="catalytic activity">
    <reaction evidence="3">
        <text>oxaloacetate + acetyl-CoA + H2O = citrate + CoA + H(+)</text>
        <dbReference type="Rhea" id="RHEA:16845"/>
        <dbReference type="ChEBI" id="CHEBI:15377"/>
        <dbReference type="ChEBI" id="CHEBI:15378"/>
        <dbReference type="ChEBI" id="CHEBI:16452"/>
        <dbReference type="ChEBI" id="CHEBI:16947"/>
        <dbReference type="ChEBI" id="CHEBI:57287"/>
        <dbReference type="ChEBI" id="CHEBI:57288"/>
        <dbReference type="EC" id="2.3.3.3"/>
    </reaction>
    <physiologicalReaction direction="left-to-right" evidence="3">
        <dbReference type="Rhea" id="RHEA:16846"/>
    </physiologicalReaction>
</comment>
<comment type="cofactor">
    <cofactor evidence="3">
        <name>Co(2+)</name>
        <dbReference type="ChEBI" id="CHEBI:48828"/>
    </cofactor>
    <cofactor evidence="3">
        <name>Mn(2+)</name>
        <dbReference type="ChEBI" id="CHEBI:29035"/>
    </cofactor>
</comment>
<comment type="activity regulation">
    <text evidence="3">Inhibited by p-hydroxymercuribenzoate and EDTA.</text>
</comment>
<comment type="biophysicochemical properties">
    <kinetics>
        <KM evidence="3">130 uM for acetyl-CoA</KM>
        <KM evidence="3">85 uM for oxaloacetate</KM>
    </kinetics>
</comment>
<comment type="subunit">
    <text evidence="3">Homotetramer.</text>
</comment>
<comment type="induction">
    <text evidence="3">Expressed under all growth conditions.</text>
</comment>
<comment type="similarity">
    <text evidence="5">Belongs to the alpha-IPM synthase/homocitrate synthase family.</text>
</comment>
<name>CIRSY_SYNAS</name>
<keyword id="KW-0170">Cobalt</keyword>
<keyword id="KW-0464">Manganese</keyword>
<keyword id="KW-1185">Reference proteome</keyword>
<keyword id="KW-0808">Transferase</keyword>
<sequence length="629" mass="71767">MAKWNPQKRVLNHEHTRFWRFELRDVDEPNLQKEVFPYDEVSRIDFDHRIIPIQPAEEIFITDTTFRDGQQARPPYTTQQIVDLYQMMSRLGGYNGIIRQTEFFLYSNRDKEAVRMCQDLGLQYPEITGWIRAAREDIPLVKEAGLKETGILTSVSDYHIFLKLNMTRSQALEEYLGIVKAILDAGIVPRCHFEDITRADIYGFCIPFAIELMKLREESGVDIKIRLCDTMGYGVTYPGASLPRGVDKLVRAFIDDADVPGRLLEWHGHNDFHKALINATTAWLYGCSAANSTLLGLGERTGNPPIEGLIIEYIGLMGKTNGIDTTVITDIANYFKNEIEYKIPSNYPFVGADFNVTRAGVHADGLIKSEEIYNIFNTTKILKRPIVPMITDKSGKAGIAYWINSHFGLSGDSTVDKRHPGISKINKWIADEYELGRVTTISTEELEAKVRKYMPELFMSDLERIKFKAAEAAIAVLRKIIDDPAMKTMQPELQEPVMQRFIEEYPSIQFAYVVDMNGKKTTRNITNIVDRAKYENYGVGTDQSDREWFIKPLQTGKLHVTDFYISKMTGALCFTVSEPITDDNDDMVGIFGVDIRVEDLVKEPEYIAEATQIALKAEYDAKYKSDHWL</sequence>
<gene>
    <name evidence="5" type="ordered locus">SYNAS_14740</name>
    <name evidence="6" type="ORF">SYN_02536</name>
</gene>
<protein>
    <recommendedName>
        <fullName evidence="5">Citrate (Re)-synthase</fullName>
        <ecNumber evidence="3">2.3.3.3</ecNumber>
    </recommendedName>
    <alternativeName>
        <fullName evidence="4">Re-citrate synthase</fullName>
    </alternativeName>
</protein>
<reference key="1">
    <citation type="journal article" date="2007" name="Proc. Natl. Acad. Sci. U.S.A.">
        <title>The genome of Syntrophus aciditrophicus: life at the thermodynamic limit of microbial growth.</title>
        <authorList>
            <person name="McInerney M.J."/>
            <person name="Rohlin L."/>
            <person name="Mouttaki H."/>
            <person name="Kim U."/>
            <person name="Krupp R.S."/>
            <person name="Rios-Hernandez L."/>
            <person name="Sieber J."/>
            <person name="Struchtemeyer C.G."/>
            <person name="Bhattacharyya A."/>
            <person name="Campbell J.W."/>
            <person name="Gunsalus R.P."/>
        </authorList>
    </citation>
    <scope>NUCLEOTIDE SEQUENCE [LARGE SCALE GENOMIC DNA]</scope>
    <source>
        <strain>SB</strain>
    </source>
</reference>
<reference key="2">
    <citation type="journal article" date="2013" name="J. Bacteriol.">
        <title>Identification and characterization of re-citrate synthase in Syntrophus aciditrophicus.</title>
        <authorList>
            <person name="Kim M."/>
            <person name="Le H."/>
            <person name="McInerney M.J."/>
            <person name="Buckel W."/>
        </authorList>
    </citation>
    <scope>FUNCTION</scope>
    <scope>CATALYTIC ACTIVITY</scope>
    <scope>COFACTOR</scope>
    <scope>ACTIVITY REGULATION</scope>
    <scope>BIOPHYSICOCHEMICAL PROPERTIES</scope>
    <scope>SUBUNIT</scope>
    <scope>INDUCTION</scope>
</reference>
<feature type="chain" id="PRO_0000449458" description="Citrate (Re)-synthase">
    <location>
        <begin position="1"/>
        <end position="629"/>
    </location>
</feature>
<feature type="domain" description="Pyruvate carboxyltransferase" evidence="2">
    <location>
        <begin position="59"/>
        <end position="329"/>
    </location>
</feature>
<feature type="domain" description="Cache" evidence="1">
    <location>
        <begin position="497"/>
        <end position="601"/>
    </location>
</feature>
<proteinExistence type="evidence at protein level"/>
<accession>Q2LTE1</accession>
<organism>
    <name type="scientific">Syntrophus aciditrophicus (strain SB)</name>
    <dbReference type="NCBI Taxonomy" id="56780"/>
    <lineage>
        <taxon>Bacteria</taxon>
        <taxon>Pseudomonadati</taxon>
        <taxon>Thermodesulfobacteriota</taxon>
        <taxon>Syntrophia</taxon>
        <taxon>Syntrophales</taxon>
        <taxon>Syntrophaceae</taxon>
        <taxon>Syntrophus</taxon>
    </lineage>
</organism>
<dbReference type="EC" id="2.3.3.3" evidence="3"/>
<dbReference type="EMBL" id="CP000252">
    <property type="protein sequence ID" value="ABC77353.2"/>
    <property type="molecule type" value="Genomic_DNA"/>
</dbReference>
<dbReference type="RefSeq" id="WP_041584842.1">
    <property type="nucleotide sequence ID" value="NC_007759.1"/>
</dbReference>
<dbReference type="SMR" id="Q2LTE1"/>
<dbReference type="STRING" id="56780.SYN_02536"/>
<dbReference type="KEGG" id="sat:SYN_02536"/>
<dbReference type="eggNOG" id="COG0119">
    <property type="taxonomic scope" value="Bacteria"/>
</dbReference>
<dbReference type="HOGENOM" id="CLU_022158_5_0_7"/>
<dbReference type="InParanoid" id="Q2LTE1"/>
<dbReference type="OrthoDB" id="9804858at2"/>
<dbReference type="Proteomes" id="UP000001933">
    <property type="component" value="Chromosome"/>
</dbReference>
<dbReference type="GO" id="GO:0050450">
    <property type="term" value="F:citrate (Re)-synthase activity"/>
    <property type="evidence" value="ECO:0007669"/>
    <property type="project" value="UniProtKB-EC"/>
</dbReference>
<dbReference type="CDD" id="cd07947">
    <property type="entry name" value="DRE_TIM_Re_CS"/>
    <property type="match status" value="1"/>
</dbReference>
<dbReference type="CDD" id="cd18773">
    <property type="entry name" value="PDC1_HK_sensor"/>
    <property type="match status" value="1"/>
</dbReference>
<dbReference type="Gene3D" id="3.20.20.70">
    <property type="entry name" value="Aldolase class I"/>
    <property type="match status" value="1"/>
</dbReference>
<dbReference type="Gene3D" id="3.30.450.20">
    <property type="entry name" value="PAS domain"/>
    <property type="match status" value="1"/>
</dbReference>
<dbReference type="InterPro" id="IPR013785">
    <property type="entry name" value="Aldolase_TIM"/>
</dbReference>
<dbReference type="InterPro" id="IPR000891">
    <property type="entry name" value="PYR_CT"/>
</dbReference>
<dbReference type="InterPro" id="IPR029151">
    <property type="entry name" value="Sensor-like_sf"/>
</dbReference>
<dbReference type="PANTHER" id="PTHR42880">
    <property type="entry name" value="HOMOCITRATE SYNTHASE"/>
    <property type="match status" value="1"/>
</dbReference>
<dbReference type="PANTHER" id="PTHR42880:SF1">
    <property type="entry name" value="ISOPROPYLMALATE_HOMOCITRATE_CITRAMALATE SYNTHASE FAMILY PROTEIN"/>
    <property type="match status" value="1"/>
</dbReference>
<dbReference type="Pfam" id="PF00682">
    <property type="entry name" value="HMGL-like"/>
    <property type="match status" value="1"/>
</dbReference>
<dbReference type="Pfam" id="PF22673">
    <property type="entry name" value="MCP-like_PDC_1"/>
    <property type="match status" value="1"/>
</dbReference>
<dbReference type="SUPFAM" id="SSF51569">
    <property type="entry name" value="Aldolase"/>
    <property type="match status" value="1"/>
</dbReference>
<dbReference type="SUPFAM" id="SSF103190">
    <property type="entry name" value="Sensory domain-like"/>
    <property type="match status" value="1"/>
</dbReference>
<dbReference type="PROSITE" id="PS50991">
    <property type="entry name" value="PYR_CT"/>
    <property type="match status" value="1"/>
</dbReference>